<sequence length="89" mass="10225">MALLDFFLSRKKTTANIAKERLQIIVAERRRGDSEPAYLPDMKRDILAVICKYIQVDPDMLSVQFEQKGDDISVLELNITLPEAEETQK</sequence>
<accession>Q7N524</accession>
<keyword id="KW-0131">Cell cycle</keyword>
<keyword id="KW-0132">Cell division</keyword>
<keyword id="KW-1185">Reference proteome</keyword>
<name>MINE_PHOLL</name>
<evidence type="ECO:0000255" key="1">
    <source>
        <dbReference type="HAMAP-Rule" id="MF_00262"/>
    </source>
</evidence>
<dbReference type="EMBL" id="BX571866">
    <property type="protein sequence ID" value="CAE14429.1"/>
    <property type="molecule type" value="Genomic_DNA"/>
</dbReference>
<dbReference type="RefSeq" id="WP_011146390.1">
    <property type="nucleotide sequence ID" value="NC_005126.1"/>
</dbReference>
<dbReference type="SMR" id="Q7N524"/>
<dbReference type="STRING" id="243265.plu2136"/>
<dbReference type="GeneID" id="48848416"/>
<dbReference type="KEGG" id="plu:plu2136"/>
<dbReference type="eggNOG" id="COG0851">
    <property type="taxonomic scope" value="Bacteria"/>
</dbReference>
<dbReference type="HOGENOM" id="CLU_137929_2_2_6"/>
<dbReference type="OrthoDB" id="9802655at2"/>
<dbReference type="Proteomes" id="UP000002514">
    <property type="component" value="Chromosome"/>
</dbReference>
<dbReference type="GO" id="GO:0051301">
    <property type="term" value="P:cell division"/>
    <property type="evidence" value="ECO:0007669"/>
    <property type="project" value="UniProtKB-KW"/>
</dbReference>
<dbReference type="GO" id="GO:0032955">
    <property type="term" value="P:regulation of division septum assembly"/>
    <property type="evidence" value="ECO:0007669"/>
    <property type="project" value="InterPro"/>
</dbReference>
<dbReference type="FunFam" id="3.30.1070.10:FF:000001">
    <property type="entry name" value="Cell division topological specificity factor"/>
    <property type="match status" value="1"/>
</dbReference>
<dbReference type="Gene3D" id="3.30.1070.10">
    <property type="entry name" value="Cell division topological specificity factor MinE"/>
    <property type="match status" value="1"/>
</dbReference>
<dbReference type="HAMAP" id="MF_00262">
    <property type="entry name" value="MinE"/>
    <property type="match status" value="1"/>
</dbReference>
<dbReference type="InterPro" id="IPR005527">
    <property type="entry name" value="MinE"/>
</dbReference>
<dbReference type="InterPro" id="IPR036707">
    <property type="entry name" value="MinE_sf"/>
</dbReference>
<dbReference type="NCBIfam" id="TIGR01215">
    <property type="entry name" value="minE"/>
    <property type="match status" value="1"/>
</dbReference>
<dbReference type="NCBIfam" id="NF001422">
    <property type="entry name" value="PRK00296.1"/>
    <property type="match status" value="1"/>
</dbReference>
<dbReference type="Pfam" id="PF03776">
    <property type="entry name" value="MinE"/>
    <property type="match status" value="1"/>
</dbReference>
<dbReference type="SUPFAM" id="SSF55229">
    <property type="entry name" value="Cell division protein MinE topological specificity domain"/>
    <property type="match status" value="1"/>
</dbReference>
<organism>
    <name type="scientific">Photorhabdus laumondii subsp. laumondii (strain DSM 15139 / CIP 105565 / TT01)</name>
    <name type="common">Photorhabdus luminescens subsp. laumondii</name>
    <dbReference type="NCBI Taxonomy" id="243265"/>
    <lineage>
        <taxon>Bacteria</taxon>
        <taxon>Pseudomonadati</taxon>
        <taxon>Pseudomonadota</taxon>
        <taxon>Gammaproteobacteria</taxon>
        <taxon>Enterobacterales</taxon>
        <taxon>Morganellaceae</taxon>
        <taxon>Photorhabdus</taxon>
    </lineage>
</organism>
<gene>
    <name evidence="1" type="primary">minE</name>
    <name type="ordered locus">plu2136</name>
</gene>
<feature type="chain" id="PRO_0000298144" description="Cell division topological specificity factor">
    <location>
        <begin position="1"/>
        <end position="89"/>
    </location>
</feature>
<proteinExistence type="inferred from homology"/>
<comment type="function">
    <text evidence="1">Prevents the cell division inhibition by proteins MinC and MinD at internal division sites while permitting inhibition at polar sites. This ensures cell division at the proper site by restricting the formation of a division septum at the midpoint of the long axis of the cell.</text>
</comment>
<comment type="similarity">
    <text evidence="1">Belongs to the MinE family.</text>
</comment>
<protein>
    <recommendedName>
        <fullName evidence="1">Cell division topological specificity factor</fullName>
    </recommendedName>
</protein>
<reference key="1">
    <citation type="journal article" date="2003" name="Nat. Biotechnol.">
        <title>The genome sequence of the entomopathogenic bacterium Photorhabdus luminescens.</title>
        <authorList>
            <person name="Duchaud E."/>
            <person name="Rusniok C."/>
            <person name="Frangeul L."/>
            <person name="Buchrieser C."/>
            <person name="Givaudan A."/>
            <person name="Taourit S."/>
            <person name="Bocs S."/>
            <person name="Boursaux-Eude C."/>
            <person name="Chandler M."/>
            <person name="Charles J.-F."/>
            <person name="Dassa E."/>
            <person name="Derose R."/>
            <person name="Derzelle S."/>
            <person name="Freyssinet G."/>
            <person name="Gaudriault S."/>
            <person name="Medigue C."/>
            <person name="Lanois A."/>
            <person name="Powell K."/>
            <person name="Siguier P."/>
            <person name="Vincent R."/>
            <person name="Wingate V."/>
            <person name="Zouine M."/>
            <person name="Glaser P."/>
            <person name="Boemare N."/>
            <person name="Danchin A."/>
            <person name="Kunst F."/>
        </authorList>
    </citation>
    <scope>NUCLEOTIDE SEQUENCE [LARGE SCALE GENOMIC DNA]</scope>
    <source>
        <strain>DSM 15139 / CIP 105565 / TT01</strain>
    </source>
</reference>